<accession>A3MVB7</accession>
<evidence type="ECO:0000255" key="1">
    <source>
        <dbReference type="HAMAP-Rule" id="MF_00098"/>
    </source>
</evidence>
<reference key="1">
    <citation type="submission" date="2007-02" db="EMBL/GenBank/DDBJ databases">
        <title>Complete sequence of Pyrobaculum calidifontis JCM 11548.</title>
        <authorList>
            <consortium name="US DOE Joint Genome Institute"/>
            <person name="Copeland A."/>
            <person name="Lucas S."/>
            <person name="Lapidus A."/>
            <person name="Barry K."/>
            <person name="Glavina del Rio T."/>
            <person name="Dalin E."/>
            <person name="Tice H."/>
            <person name="Pitluck S."/>
            <person name="Chain P."/>
            <person name="Malfatti S."/>
            <person name="Shin M."/>
            <person name="Vergez L."/>
            <person name="Schmutz J."/>
            <person name="Larimer F."/>
            <person name="Land M."/>
            <person name="Hauser L."/>
            <person name="Kyrpides N."/>
            <person name="Mikhailova N."/>
            <person name="Cozen A.E."/>
            <person name="Fitz-Gibbon S.T."/>
            <person name="House C.H."/>
            <person name="Saltikov C."/>
            <person name="Lowe T.M."/>
            <person name="Richardson P."/>
        </authorList>
    </citation>
    <scope>NUCLEOTIDE SEQUENCE [LARGE SCALE GENOMIC DNA]</scope>
    <source>
        <strain>DSM 21063 / JCM 11548 / VA1</strain>
    </source>
</reference>
<name>SYM_PYRCJ</name>
<protein>
    <recommendedName>
        <fullName evidence="1">Methionine--tRNA ligase</fullName>
        <ecNumber evidence="1">6.1.1.10</ecNumber>
    </recommendedName>
    <alternativeName>
        <fullName evidence="1">Methionyl-tRNA synthetase</fullName>
        <shortName evidence="1">MetRS</shortName>
    </alternativeName>
</protein>
<feature type="chain" id="PRO_0000331954" description="Methionine--tRNA ligase">
    <location>
        <begin position="1"/>
        <end position="570"/>
    </location>
</feature>
<feature type="short sequence motif" description="'HIGH' region">
    <location>
        <begin position="11"/>
        <end position="21"/>
    </location>
</feature>
<feature type="short sequence motif" description="'KMSKS' region">
    <location>
        <begin position="333"/>
        <end position="337"/>
    </location>
</feature>
<feature type="binding site" evidence="1">
    <location>
        <position position="143"/>
    </location>
    <ligand>
        <name>Zn(2+)</name>
        <dbReference type="ChEBI" id="CHEBI:29105"/>
    </ligand>
</feature>
<feature type="binding site" evidence="1">
    <location>
        <position position="146"/>
    </location>
    <ligand>
        <name>Zn(2+)</name>
        <dbReference type="ChEBI" id="CHEBI:29105"/>
    </ligand>
</feature>
<feature type="binding site" evidence="1">
    <location>
        <position position="156"/>
    </location>
    <ligand>
        <name>Zn(2+)</name>
        <dbReference type="ChEBI" id="CHEBI:29105"/>
    </ligand>
</feature>
<feature type="binding site" evidence="1">
    <location>
        <position position="159"/>
    </location>
    <ligand>
        <name>Zn(2+)</name>
        <dbReference type="ChEBI" id="CHEBI:29105"/>
    </ligand>
</feature>
<feature type="binding site" evidence="1">
    <location>
        <position position="336"/>
    </location>
    <ligand>
        <name>ATP</name>
        <dbReference type="ChEBI" id="CHEBI:30616"/>
    </ligand>
</feature>
<dbReference type="EC" id="6.1.1.10" evidence="1"/>
<dbReference type="EMBL" id="CP000561">
    <property type="protein sequence ID" value="ABO08584.1"/>
    <property type="molecule type" value="Genomic_DNA"/>
</dbReference>
<dbReference type="RefSeq" id="WP_011849842.1">
    <property type="nucleotide sequence ID" value="NC_009073.1"/>
</dbReference>
<dbReference type="SMR" id="A3MVB7"/>
<dbReference type="STRING" id="410359.Pcal_1159"/>
<dbReference type="GeneID" id="4908296"/>
<dbReference type="KEGG" id="pcl:Pcal_1159"/>
<dbReference type="eggNOG" id="arCOG00810">
    <property type="taxonomic scope" value="Archaea"/>
</dbReference>
<dbReference type="HOGENOM" id="CLU_009710_1_2_2"/>
<dbReference type="OrthoDB" id="371856at2157"/>
<dbReference type="Proteomes" id="UP000001431">
    <property type="component" value="Chromosome"/>
</dbReference>
<dbReference type="GO" id="GO:0017101">
    <property type="term" value="C:aminoacyl-tRNA synthetase multienzyme complex"/>
    <property type="evidence" value="ECO:0007669"/>
    <property type="project" value="TreeGrafter"/>
</dbReference>
<dbReference type="GO" id="GO:0005829">
    <property type="term" value="C:cytosol"/>
    <property type="evidence" value="ECO:0007669"/>
    <property type="project" value="TreeGrafter"/>
</dbReference>
<dbReference type="GO" id="GO:0005524">
    <property type="term" value="F:ATP binding"/>
    <property type="evidence" value="ECO:0007669"/>
    <property type="project" value="UniProtKB-UniRule"/>
</dbReference>
<dbReference type="GO" id="GO:0046872">
    <property type="term" value="F:metal ion binding"/>
    <property type="evidence" value="ECO:0007669"/>
    <property type="project" value="UniProtKB-KW"/>
</dbReference>
<dbReference type="GO" id="GO:0004825">
    <property type="term" value="F:methionine-tRNA ligase activity"/>
    <property type="evidence" value="ECO:0007669"/>
    <property type="project" value="UniProtKB-UniRule"/>
</dbReference>
<dbReference type="GO" id="GO:0006431">
    <property type="term" value="P:methionyl-tRNA aminoacylation"/>
    <property type="evidence" value="ECO:0007669"/>
    <property type="project" value="UniProtKB-UniRule"/>
</dbReference>
<dbReference type="CDD" id="cd07957">
    <property type="entry name" value="Anticodon_Ia_Met"/>
    <property type="match status" value="1"/>
</dbReference>
<dbReference type="CDD" id="cd00814">
    <property type="entry name" value="MetRS_core"/>
    <property type="match status" value="1"/>
</dbReference>
<dbReference type="FunFam" id="2.20.28.20:FF:000001">
    <property type="entry name" value="Methionine--tRNA ligase"/>
    <property type="match status" value="1"/>
</dbReference>
<dbReference type="Gene3D" id="3.40.50.620">
    <property type="entry name" value="HUPs"/>
    <property type="match status" value="1"/>
</dbReference>
<dbReference type="Gene3D" id="1.10.730.10">
    <property type="entry name" value="Isoleucyl-tRNA Synthetase, Domain 1"/>
    <property type="match status" value="1"/>
</dbReference>
<dbReference type="Gene3D" id="2.20.28.20">
    <property type="entry name" value="Methionyl-tRNA synthetase, Zn-domain"/>
    <property type="match status" value="1"/>
</dbReference>
<dbReference type="HAMAP" id="MF_00098">
    <property type="entry name" value="Met_tRNA_synth_type1"/>
    <property type="match status" value="1"/>
</dbReference>
<dbReference type="InterPro" id="IPR041872">
    <property type="entry name" value="Anticodon_Met"/>
</dbReference>
<dbReference type="InterPro" id="IPR023458">
    <property type="entry name" value="Met-tRNA_ligase_1"/>
</dbReference>
<dbReference type="InterPro" id="IPR014758">
    <property type="entry name" value="Met-tRNA_synth"/>
</dbReference>
<dbReference type="InterPro" id="IPR015413">
    <property type="entry name" value="Methionyl/Leucyl_tRNA_Synth"/>
</dbReference>
<dbReference type="InterPro" id="IPR033911">
    <property type="entry name" value="MetRS_core"/>
</dbReference>
<dbReference type="InterPro" id="IPR029038">
    <property type="entry name" value="MetRS_Zn"/>
</dbReference>
<dbReference type="InterPro" id="IPR014729">
    <property type="entry name" value="Rossmann-like_a/b/a_fold"/>
</dbReference>
<dbReference type="InterPro" id="IPR009080">
    <property type="entry name" value="tRNAsynth_Ia_anticodon-bd"/>
</dbReference>
<dbReference type="NCBIfam" id="TIGR00398">
    <property type="entry name" value="metG"/>
    <property type="match status" value="1"/>
</dbReference>
<dbReference type="PANTHER" id="PTHR45765">
    <property type="entry name" value="METHIONINE--TRNA LIGASE"/>
    <property type="match status" value="1"/>
</dbReference>
<dbReference type="PANTHER" id="PTHR45765:SF1">
    <property type="entry name" value="METHIONINE--TRNA LIGASE, CYTOPLASMIC"/>
    <property type="match status" value="1"/>
</dbReference>
<dbReference type="Pfam" id="PF19303">
    <property type="entry name" value="Anticodon_3"/>
    <property type="match status" value="1"/>
</dbReference>
<dbReference type="Pfam" id="PF09334">
    <property type="entry name" value="tRNA-synt_1g"/>
    <property type="match status" value="1"/>
</dbReference>
<dbReference type="PRINTS" id="PR01041">
    <property type="entry name" value="TRNASYNTHMET"/>
</dbReference>
<dbReference type="SUPFAM" id="SSF47323">
    <property type="entry name" value="Anticodon-binding domain of a subclass of class I aminoacyl-tRNA synthetases"/>
    <property type="match status" value="1"/>
</dbReference>
<dbReference type="SUPFAM" id="SSF57770">
    <property type="entry name" value="Methionyl-tRNA synthetase (MetRS), Zn-domain"/>
    <property type="match status" value="1"/>
</dbReference>
<dbReference type="SUPFAM" id="SSF52374">
    <property type="entry name" value="Nucleotidylyl transferase"/>
    <property type="match status" value="1"/>
</dbReference>
<organism>
    <name type="scientific">Pyrobaculum calidifontis (strain DSM 21063 / JCM 11548 / VA1)</name>
    <dbReference type="NCBI Taxonomy" id="410359"/>
    <lineage>
        <taxon>Archaea</taxon>
        <taxon>Thermoproteota</taxon>
        <taxon>Thermoprotei</taxon>
        <taxon>Thermoproteales</taxon>
        <taxon>Thermoproteaceae</taxon>
        <taxon>Pyrobaculum</taxon>
    </lineage>
</organism>
<sequence length="570" mass="65756">MAKYVIGSAWPYVQTVPHLGNMIGSVLSADVYARYLRLRGHDVVFVSGSDMHGTPIEVEAIQLGVDPAEYAFKMHGVVAELFKRWNISFDLYTHTHSETHVAFVQEFFKRIYENGYIFTKDEEMPYCPRDKIFLPDRFIIGKCPYCGYERARGDQCENCGRLLDPKQLVEPRCAVCGSKPEWRLTRHWYLDLRRLEDKIRKYVEENPHLPQNAKEMSLAMLKEGLKPRAVTRDNKWGIPAPFPGAEGKTIYVWFEAVLGYISAVVEHFKRLGKESEWEKYWRDPDTKIIFFVGKDNIPFHVIILPALLLANGGGYTLPTTTASTEYLLYEGDKFSKSRRWGIWIDEALHLLPADYWRFILVYIRPENRDTSFTWAQALEIVNKVLNDDVGNYVNRVLSFIKSRMGGVVPPPGTPQEEDKSFLQAALQLFKKAERHYEAVELKDALHTVVEIAREGNRYLNARAPWDLLKTRPEEANAVMYHAYWSLKMLAAGLAPVIPESVEKMWEMMGRPASLTWDEALREPAPGVKLGEVKPLFRKVGEDEVKKMLQALEQMKREKASKKYPWEQALL</sequence>
<gene>
    <name evidence="1" type="primary">metG</name>
    <name type="ordered locus">Pcal_1159</name>
</gene>
<proteinExistence type="inferred from homology"/>
<comment type="function">
    <text evidence="1">Is required not only for elongation of protein synthesis but also for the initiation of all mRNA translation through initiator tRNA(fMet) aminoacylation.</text>
</comment>
<comment type="catalytic activity">
    <reaction evidence="1">
        <text>tRNA(Met) + L-methionine + ATP = L-methionyl-tRNA(Met) + AMP + diphosphate</text>
        <dbReference type="Rhea" id="RHEA:13481"/>
        <dbReference type="Rhea" id="RHEA-COMP:9667"/>
        <dbReference type="Rhea" id="RHEA-COMP:9698"/>
        <dbReference type="ChEBI" id="CHEBI:30616"/>
        <dbReference type="ChEBI" id="CHEBI:33019"/>
        <dbReference type="ChEBI" id="CHEBI:57844"/>
        <dbReference type="ChEBI" id="CHEBI:78442"/>
        <dbReference type="ChEBI" id="CHEBI:78530"/>
        <dbReference type="ChEBI" id="CHEBI:456215"/>
        <dbReference type="EC" id="6.1.1.10"/>
    </reaction>
</comment>
<comment type="cofactor">
    <cofactor evidence="1">
        <name>Zn(2+)</name>
        <dbReference type="ChEBI" id="CHEBI:29105"/>
    </cofactor>
    <text evidence="1">Binds 1 zinc ion per subunit.</text>
</comment>
<comment type="subcellular location">
    <subcellularLocation>
        <location evidence="1">Cytoplasm</location>
    </subcellularLocation>
</comment>
<comment type="similarity">
    <text evidence="1">Belongs to the class-I aminoacyl-tRNA synthetase family. MetG type 1 subfamily.</text>
</comment>
<keyword id="KW-0030">Aminoacyl-tRNA synthetase</keyword>
<keyword id="KW-0067">ATP-binding</keyword>
<keyword id="KW-0963">Cytoplasm</keyword>
<keyword id="KW-0436">Ligase</keyword>
<keyword id="KW-0479">Metal-binding</keyword>
<keyword id="KW-0547">Nucleotide-binding</keyword>
<keyword id="KW-0648">Protein biosynthesis</keyword>
<keyword id="KW-0862">Zinc</keyword>